<feature type="chain" id="PRO_0000111429" description="Small ribosomal subunit protein uS9">
    <location>
        <begin position="1"/>
        <end position="134"/>
    </location>
</feature>
<feature type="region of interest" description="Disordered" evidence="1">
    <location>
        <begin position="113"/>
        <end position="134"/>
    </location>
</feature>
<feature type="compositionally biased region" description="Basic residues" evidence="1">
    <location>
        <begin position="120"/>
        <end position="134"/>
    </location>
</feature>
<gene>
    <name type="primary">rpsI</name>
    <name type="ordered locus">TM_1453</name>
</gene>
<organism>
    <name type="scientific">Thermotoga maritima (strain ATCC 43589 / DSM 3109 / JCM 10099 / NBRC 100826 / MSB8)</name>
    <dbReference type="NCBI Taxonomy" id="243274"/>
    <lineage>
        <taxon>Bacteria</taxon>
        <taxon>Thermotogati</taxon>
        <taxon>Thermotogota</taxon>
        <taxon>Thermotogae</taxon>
        <taxon>Thermotogales</taxon>
        <taxon>Thermotogaceae</taxon>
        <taxon>Thermotoga</taxon>
    </lineage>
</organism>
<comment type="similarity">
    <text evidence="2">Belongs to the universal ribosomal protein uS9 family.</text>
</comment>
<sequence>MAEVVGYYGTGRRKTAVARVYLRPGEGKVKVNGKEYESLNDYFKNPAWTKHAIEPLEVTNTLGKFDLVIRVNGGGLSGQSGAVRLGIARALLQYDQNLRPVLKKYKMLTRDPREVERKKYGLKKARRAPQFSKR</sequence>
<name>RS9_THEMA</name>
<reference key="1">
    <citation type="journal article" date="1999" name="Nature">
        <title>Evidence for lateral gene transfer between Archaea and Bacteria from genome sequence of Thermotoga maritima.</title>
        <authorList>
            <person name="Nelson K.E."/>
            <person name="Clayton R.A."/>
            <person name="Gill S.R."/>
            <person name="Gwinn M.L."/>
            <person name="Dodson R.J."/>
            <person name="Haft D.H."/>
            <person name="Hickey E.K."/>
            <person name="Peterson J.D."/>
            <person name="Nelson W.C."/>
            <person name="Ketchum K.A."/>
            <person name="McDonald L.A."/>
            <person name="Utterback T.R."/>
            <person name="Malek J.A."/>
            <person name="Linher K.D."/>
            <person name="Garrett M.M."/>
            <person name="Stewart A.M."/>
            <person name="Cotton M.D."/>
            <person name="Pratt M.S."/>
            <person name="Phillips C.A."/>
            <person name="Richardson D.L."/>
            <person name="Heidelberg J.F."/>
            <person name="Sutton G.G."/>
            <person name="Fleischmann R.D."/>
            <person name="Eisen J.A."/>
            <person name="White O."/>
            <person name="Salzberg S.L."/>
            <person name="Smith H.O."/>
            <person name="Venter J.C."/>
            <person name="Fraser C.M."/>
        </authorList>
    </citation>
    <scope>NUCLEOTIDE SEQUENCE [LARGE SCALE GENOMIC DNA]</scope>
    <source>
        <strain>ATCC 43589 / DSM 3109 / JCM 10099 / NBRC 100826 / MSB8</strain>
    </source>
</reference>
<dbReference type="EMBL" id="AE000512">
    <property type="protein sequence ID" value="AAD36521.1"/>
    <property type="molecule type" value="Genomic_DNA"/>
</dbReference>
<dbReference type="PIR" id="F72250">
    <property type="entry name" value="F72250"/>
</dbReference>
<dbReference type="RefSeq" id="NP_229252.1">
    <property type="nucleotide sequence ID" value="NC_000853.1"/>
</dbReference>
<dbReference type="RefSeq" id="WP_004081735.1">
    <property type="nucleotide sequence ID" value="NC_000853.1"/>
</dbReference>
<dbReference type="SMR" id="Q9X1G4"/>
<dbReference type="FunCoup" id="Q9X1G4">
    <property type="interactions" value="437"/>
</dbReference>
<dbReference type="STRING" id="243274.TM_1453"/>
<dbReference type="PaxDb" id="243274-THEMA_07050"/>
<dbReference type="EnsemblBacteria" id="AAD36521">
    <property type="protein sequence ID" value="AAD36521"/>
    <property type="gene ID" value="TM_1453"/>
</dbReference>
<dbReference type="KEGG" id="tma:TM1453"/>
<dbReference type="KEGG" id="tmi:THEMA_07050"/>
<dbReference type="KEGG" id="tmm:Tmari_1459"/>
<dbReference type="KEGG" id="tmw:THMA_1483"/>
<dbReference type="eggNOG" id="COG0103">
    <property type="taxonomic scope" value="Bacteria"/>
</dbReference>
<dbReference type="InParanoid" id="Q9X1G4"/>
<dbReference type="OrthoDB" id="9803965at2"/>
<dbReference type="Proteomes" id="UP000008183">
    <property type="component" value="Chromosome"/>
</dbReference>
<dbReference type="GO" id="GO:0022627">
    <property type="term" value="C:cytosolic small ribosomal subunit"/>
    <property type="evidence" value="ECO:0000318"/>
    <property type="project" value="GO_Central"/>
</dbReference>
<dbReference type="GO" id="GO:0003723">
    <property type="term" value="F:RNA binding"/>
    <property type="evidence" value="ECO:0000318"/>
    <property type="project" value="GO_Central"/>
</dbReference>
<dbReference type="GO" id="GO:0003735">
    <property type="term" value="F:structural constituent of ribosome"/>
    <property type="evidence" value="ECO:0000318"/>
    <property type="project" value="GO_Central"/>
</dbReference>
<dbReference type="GO" id="GO:0006412">
    <property type="term" value="P:translation"/>
    <property type="evidence" value="ECO:0007669"/>
    <property type="project" value="UniProtKB-UniRule"/>
</dbReference>
<dbReference type="FunFam" id="3.30.230.10:FF:000001">
    <property type="entry name" value="30S ribosomal protein S9"/>
    <property type="match status" value="1"/>
</dbReference>
<dbReference type="Gene3D" id="3.30.230.10">
    <property type="match status" value="1"/>
</dbReference>
<dbReference type="HAMAP" id="MF_00532_B">
    <property type="entry name" value="Ribosomal_uS9_B"/>
    <property type="match status" value="1"/>
</dbReference>
<dbReference type="InterPro" id="IPR020568">
    <property type="entry name" value="Ribosomal_Su5_D2-typ_SF"/>
</dbReference>
<dbReference type="InterPro" id="IPR000754">
    <property type="entry name" value="Ribosomal_uS9"/>
</dbReference>
<dbReference type="InterPro" id="IPR023035">
    <property type="entry name" value="Ribosomal_uS9_bac/plastid"/>
</dbReference>
<dbReference type="InterPro" id="IPR020574">
    <property type="entry name" value="Ribosomal_uS9_CS"/>
</dbReference>
<dbReference type="InterPro" id="IPR014721">
    <property type="entry name" value="Ribsml_uS5_D2-typ_fold_subgr"/>
</dbReference>
<dbReference type="NCBIfam" id="NF001099">
    <property type="entry name" value="PRK00132.1"/>
    <property type="match status" value="1"/>
</dbReference>
<dbReference type="PANTHER" id="PTHR21569">
    <property type="entry name" value="RIBOSOMAL PROTEIN S9"/>
    <property type="match status" value="1"/>
</dbReference>
<dbReference type="PANTHER" id="PTHR21569:SF1">
    <property type="entry name" value="SMALL RIBOSOMAL SUBUNIT PROTEIN US9M"/>
    <property type="match status" value="1"/>
</dbReference>
<dbReference type="Pfam" id="PF00380">
    <property type="entry name" value="Ribosomal_S9"/>
    <property type="match status" value="1"/>
</dbReference>
<dbReference type="SUPFAM" id="SSF54211">
    <property type="entry name" value="Ribosomal protein S5 domain 2-like"/>
    <property type="match status" value="1"/>
</dbReference>
<dbReference type="PROSITE" id="PS00360">
    <property type="entry name" value="RIBOSOMAL_S9"/>
    <property type="match status" value="1"/>
</dbReference>
<proteinExistence type="inferred from homology"/>
<protein>
    <recommendedName>
        <fullName evidence="2">Small ribosomal subunit protein uS9</fullName>
    </recommendedName>
    <alternativeName>
        <fullName>30S ribosomal protein S9</fullName>
    </alternativeName>
</protein>
<keyword id="KW-1185">Reference proteome</keyword>
<keyword id="KW-0687">Ribonucleoprotein</keyword>
<keyword id="KW-0689">Ribosomal protein</keyword>
<evidence type="ECO:0000256" key="1">
    <source>
        <dbReference type="SAM" id="MobiDB-lite"/>
    </source>
</evidence>
<evidence type="ECO:0000305" key="2"/>
<accession>Q9X1G4</accession>